<protein>
    <recommendedName>
        <fullName evidence="1">Cell division inhibitor SulA</fullName>
    </recommendedName>
</protein>
<gene>
    <name evidence="1" type="primary">sulA</name>
    <name type="ordered locus">SbBS512_E2358</name>
</gene>
<sequence length="169" mass="18801">MYTSGYAHRSSSFSSAASKIARVSTENTTAGLISEVVYREDQPMMTQLLLLPLLQQLGQQSRWQLWLTPQQKLSREWVQASGLPLTKVMQISQLSPCHTVESMVRALRTGNYSVVIGWLADDLTEEEHAELVDAANEGNAMGFIMRPVSASSHATRQLSGLKIHSNLYH</sequence>
<proteinExistence type="inferred from homology"/>
<name>SULA_SHIB3</name>
<keyword id="KW-0131">Cell cycle</keyword>
<keyword id="KW-0132">Cell division</keyword>
<keyword id="KW-0227">DNA damage</keyword>
<keyword id="KW-1185">Reference proteome</keyword>
<keyword id="KW-0717">Septation</keyword>
<keyword id="KW-0742">SOS response</keyword>
<reference key="1">
    <citation type="submission" date="2008-05" db="EMBL/GenBank/DDBJ databases">
        <title>Complete sequence of Shigella boydii serotype 18 strain BS512.</title>
        <authorList>
            <person name="Rasko D.A."/>
            <person name="Rosovitz M."/>
            <person name="Maurelli A.T."/>
            <person name="Myers G."/>
            <person name="Seshadri R."/>
            <person name="Cer R."/>
            <person name="Jiang L."/>
            <person name="Ravel J."/>
            <person name="Sebastian Y."/>
        </authorList>
    </citation>
    <scope>NUCLEOTIDE SEQUENCE [LARGE SCALE GENOMIC DNA]</scope>
    <source>
        <strain>CDC 3083-94 / BS512</strain>
    </source>
</reference>
<dbReference type="EMBL" id="CP001063">
    <property type="protein sequence ID" value="ACD10024.1"/>
    <property type="molecule type" value="Genomic_DNA"/>
</dbReference>
<dbReference type="RefSeq" id="WP_000288710.1">
    <property type="nucleotide sequence ID" value="NC_010658.1"/>
</dbReference>
<dbReference type="SMR" id="B2TTT7"/>
<dbReference type="STRING" id="344609.SbBS512_E2358"/>
<dbReference type="GeneID" id="93776456"/>
<dbReference type="KEGG" id="sbc:SbBS512_E2358"/>
<dbReference type="HOGENOM" id="CLU_118972_1_0_6"/>
<dbReference type="Proteomes" id="UP000001030">
    <property type="component" value="Chromosome"/>
</dbReference>
<dbReference type="GO" id="GO:0000917">
    <property type="term" value="P:division septum assembly"/>
    <property type="evidence" value="ECO:0007669"/>
    <property type="project" value="UniProtKB-KW"/>
</dbReference>
<dbReference type="GO" id="GO:0006281">
    <property type="term" value="P:DNA repair"/>
    <property type="evidence" value="ECO:0007669"/>
    <property type="project" value="TreeGrafter"/>
</dbReference>
<dbReference type="GO" id="GO:0051782">
    <property type="term" value="P:negative regulation of cell division"/>
    <property type="evidence" value="ECO:0007669"/>
    <property type="project" value="UniProtKB-UniRule"/>
</dbReference>
<dbReference type="GO" id="GO:0009432">
    <property type="term" value="P:SOS response"/>
    <property type="evidence" value="ECO:0007669"/>
    <property type="project" value="UniProtKB-UniRule"/>
</dbReference>
<dbReference type="FunFam" id="3.40.50.300:FF:000417">
    <property type="entry name" value="Cell division inhibitor SulA"/>
    <property type="match status" value="1"/>
</dbReference>
<dbReference type="Gene3D" id="3.40.50.300">
    <property type="entry name" value="P-loop containing nucleotide triphosphate hydrolases"/>
    <property type="match status" value="1"/>
</dbReference>
<dbReference type="HAMAP" id="MF_01179">
    <property type="entry name" value="SulA"/>
    <property type="match status" value="1"/>
</dbReference>
<dbReference type="InterPro" id="IPR004596">
    <property type="entry name" value="Cell_div_suppressor_SulA"/>
</dbReference>
<dbReference type="InterPro" id="IPR027417">
    <property type="entry name" value="P-loop_NTPase"/>
</dbReference>
<dbReference type="InterPro" id="IPR050356">
    <property type="entry name" value="SulA_CellDiv_inhibitor"/>
</dbReference>
<dbReference type="InterPro" id="IPR047696">
    <property type="entry name" value="SulA_enterobact"/>
</dbReference>
<dbReference type="NCBIfam" id="NF007892">
    <property type="entry name" value="PRK10595.1"/>
    <property type="match status" value="1"/>
</dbReference>
<dbReference type="NCBIfam" id="TIGR00623">
    <property type="entry name" value="SOS_SulA_coli"/>
    <property type="match status" value="1"/>
</dbReference>
<dbReference type="PANTHER" id="PTHR35369">
    <property type="entry name" value="BLR3025 PROTEIN-RELATED"/>
    <property type="match status" value="1"/>
</dbReference>
<dbReference type="PANTHER" id="PTHR35369:SF4">
    <property type="entry name" value="CELL DIVISION INHIBITOR SULA"/>
    <property type="match status" value="1"/>
</dbReference>
<dbReference type="Pfam" id="PF03846">
    <property type="entry name" value="SulA"/>
    <property type="match status" value="1"/>
</dbReference>
<dbReference type="PIRSF" id="PIRSF003093">
    <property type="entry name" value="SulA"/>
    <property type="match status" value="1"/>
</dbReference>
<dbReference type="SUPFAM" id="SSF52540">
    <property type="entry name" value="P-loop containing nucleoside triphosphate hydrolases"/>
    <property type="match status" value="1"/>
</dbReference>
<feature type="chain" id="PRO_1000138172" description="Cell division inhibitor SulA">
    <location>
        <begin position="1"/>
        <end position="169"/>
    </location>
</feature>
<feature type="region of interest" description="FtsZ binding" evidence="1">
    <location>
        <begin position="106"/>
        <end position="112"/>
    </location>
</feature>
<feature type="region of interest" description="Lon protease binding" evidence="1">
    <location>
        <begin position="162"/>
        <end position="169"/>
    </location>
</feature>
<feature type="site" description="Essential for degradation by Lon protease" evidence="1">
    <location>
        <position position="169"/>
    </location>
</feature>
<comment type="function">
    <text evidence="1">Component of the SOS system and an inhibitor of cell division. Accumulation of SulA causes rapid cessation of cell division and the appearance of long, non-septate filaments. In the presence of GTP, binds a polymerization-competent form of FtsZ in a 1:1 ratio, thus inhibiting FtsZ polymerization and therefore preventing it from participating in the assembly of the Z ring. This mechanism prevents the premature segregation of damaged DNA to daughter cells during cell division.</text>
</comment>
<comment type="subunit">
    <text evidence="1">Interacts with FtsZ.</text>
</comment>
<comment type="induction">
    <text evidence="1">By DNA damage, as part of the SOS response.</text>
</comment>
<comment type="PTM">
    <text evidence="1">Is rapidly cleaved and degraded by the Lon protease once DNA damage is repaired.</text>
</comment>
<comment type="similarity">
    <text evidence="1">Belongs to the SulA family.</text>
</comment>
<organism>
    <name type="scientific">Shigella boydii serotype 18 (strain CDC 3083-94 / BS512)</name>
    <dbReference type="NCBI Taxonomy" id="344609"/>
    <lineage>
        <taxon>Bacteria</taxon>
        <taxon>Pseudomonadati</taxon>
        <taxon>Pseudomonadota</taxon>
        <taxon>Gammaproteobacteria</taxon>
        <taxon>Enterobacterales</taxon>
        <taxon>Enterobacteriaceae</taxon>
        <taxon>Shigella</taxon>
    </lineage>
</organism>
<evidence type="ECO:0000255" key="1">
    <source>
        <dbReference type="HAMAP-Rule" id="MF_01179"/>
    </source>
</evidence>
<accession>B2TTT7</accession>